<organism>
    <name type="scientific">Oryza sativa subsp. japonica</name>
    <name type="common">Rice</name>
    <dbReference type="NCBI Taxonomy" id="39947"/>
    <lineage>
        <taxon>Eukaryota</taxon>
        <taxon>Viridiplantae</taxon>
        <taxon>Streptophyta</taxon>
        <taxon>Embryophyta</taxon>
        <taxon>Tracheophyta</taxon>
        <taxon>Spermatophyta</taxon>
        <taxon>Magnoliopsida</taxon>
        <taxon>Liliopsida</taxon>
        <taxon>Poales</taxon>
        <taxon>Poaceae</taxon>
        <taxon>BOP clade</taxon>
        <taxon>Oryzoideae</taxon>
        <taxon>Oryzeae</taxon>
        <taxon>Oryzinae</taxon>
        <taxon>Oryza</taxon>
        <taxon>Oryza sativa</taxon>
    </lineage>
</organism>
<keyword id="KW-0217">Developmental protein</keyword>
<keyword id="KW-0539">Nucleus</keyword>
<keyword id="KW-1185">Reference proteome</keyword>
<protein>
    <recommendedName>
        <fullName>LOB domain-containing protein 6</fullName>
    </recommendedName>
    <alternativeName>
        <fullName>Crown rootless-like protein 3</fullName>
    </alternativeName>
    <alternativeName>
        <fullName>Protein ASYMMETRIC LEAVES 2</fullName>
    </alternativeName>
</protein>
<sequence>MASSSASSVPAPSGSVITIASASASAAANTAACGTGSPCAACKFLRRKCQPDCVFAPYFPPDNPQKFVHVHRVFGASNVTKLLNELHPYQREDAVNSLAYEADMRLRDPVYGCVAIISILQRNLRQLQQDLARAKFELSKYQQAAAAAAAASASTGTNNGPHSMAEFIGNAVPNGAQSFINVGHSAALASVGGAAACFGQEQQFSAVHMLSRSYEGEPIARLGGNGGYEFGYSTSMAGGGHMSGLGALGGAPFLKSGIAGSDERQGAGQ</sequence>
<accession>Q8LQH4</accession>
<accession>A0A0P0VBD7</accession>
<accession>A3A0D7</accession>
<accession>B2KKZ2</accession>
<accession>B7EJD3</accession>
<accession>B9EV98</accession>
<name>LBD6_ORYSJ</name>
<comment type="function">
    <text evidence="1">Negative regulator of cell proliferation in the adaxial side of leaves. Regulates the formation of a symmetric lamina and the establishment of venation (By similarity).</text>
</comment>
<comment type="subcellular location">
    <subcellularLocation>
        <location evidence="1">Nucleus</location>
    </subcellularLocation>
</comment>
<comment type="similarity">
    <text evidence="3">Belongs to the LOB domain-containing protein family.</text>
</comment>
<comment type="sequence caution" evidence="3">
    <conflict type="erroneous gene model prediction">
        <sequence resource="EMBL-CDS" id="EEE55782"/>
    </conflict>
</comment>
<proteinExistence type="evidence at transcript level"/>
<dbReference type="EMBL" id="AB200237">
    <property type="protein sequence ID" value="BAD88526.1"/>
    <property type="molecule type" value="mRNA"/>
</dbReference>
<dbReference type="EMBL" id="EF540766">
    <property type="protein sequence ID" value="ABU44494.1"/>
    <property type="molecule type" value="mRNA"/>
</dbReference>
<dbReference type="EMBL" id="AP003431">
    <property type="protein sequence ID" value="BAB92647.1"/>
    <property type="molecule type" value="Genomic_DNA"/>
</dbReference>
<dbReference type="EMBL" id="AP008207">
    <property type="protein sequence ID" value="BAF06960.1"/>
    <property type="molecule type" value="Genomic_DNA"/>
</dbReference>
<dbReference type="EMBL" id="AP014957">
    <property type="protein sequence ID" value="BAS75644.1"/>
    <property type="molecule type" value="Genomic_DNA"/>
</dbReference>
<dbReference type="EMBL" id="CM000138">
    <property type="protein sequence ID" value="EEE55782.1"/>
    <property type="status" value="ALT_SEQ"/>
    <property type="molecule type" value="Genomic_DNA"/>
</dbReference>
<dbReference type="EMBL" id="AK071407">
    <property type="protein sequence ID" value="BAG92480.1"/>
    <property type="molecule type" value="mRNA"/>
</dbReference>
<dbReference type="EMBL" id="AK119575">
    <property type="protein sequence ID" value="BAG99700.1"/>
    <property type="molecule type" value="mRNA"/>
</dbReference>
<dbReference type="RefSeq" id="XP_015634701.1">
    <property type="nucleotide sequence ID" value="XM_015779215.1"/>
</dbReference>
<dbReference type="SMR" id="Q8LQH4"/>
<dbReference type="FunCoup" id="Q8LQH4">
    <property type="interactions" value="2"/>
</dbReference>
<dbReference type="PaxDb" id="39947-Q8LQH4"/>
<dbReference type="EnsemblPlants" id="Os01t0889400-01">
    <property type="protein sequence ID" value="Os01t0889400-01"/>
    <property type="gene ID" value="Os01g0889400"/>
</dbReference>
<dbReference type="EnsemblPlants" id="Os01t0889400-02">
    <property type="protein sequence ID" value="Os01t0889400-02"/>
    <property type="gene ID" value="Os01g0889400"/>
</dbReference>
<dbReference type="Gramene" id="Os01t0889400-01">
    <property type="protein sequence ID" value="Os01t0889400-01"/>
    <property type="gene ID" value="Os01g0889400"/>
</dbReference>
<dbReference type="Gramene" id="Os01t0889400-02">
    <property type="protein sequence ID" value="Os01t0889400-02"/>
    <property type="gene ID" value="Os01g0889400"/>
</dbReference>
<dbReference type="KEGG" id="dosa:Os01g0889400"/>
<dbReference type="eggNOG" id="ENOG502QV43">
    <property type="taxonomic scope" value="Eukaryota"/>
</dbReference>
<dbReference type="HOGENOM" id="CLU_058353_1_2_1"/>
<dbReference type="InParanoid" id="Q8LQH4"/>
<dbReference type="OMA" id="DEWAYVS"/>
<dbReference type="OrthoDB" id="2016447at2759"/>
<dbReference type="Proteomes" id="UP000000763">
    <property type="component" value="Chromosome 1"/>
</dbReference>
<dbReference type="Proteomes" id="UP000007752">
    <property type="component" value="Chromosome 1"/>
</dbReference>
<dbReference type="Proteomes" id="UP000059680">
    <property type="component" value="Chromosome 1"/>
</dbReference>
<dbReference type="GO" id="GO:0005634">
    <property type="term" value="C:nucleus"/>
    <property type="evidence" value="ECO:0007669"/>
    <property type="project" value="UniProtKB-SubCell"/>
</dbReference>
<dbReference type="InterPro" id="IPR004883">
    <property type="entry name" value="LOB"/>
</dbReference>
<dbReference type="PANTHER" id="PTHR31301">
    <property type="entry name" value="LOB DOMAIN-CONTAINING PROTEIN 4-RELATED"/>
    <property type="match status" value="1"/>
</dbReference>
<dbReference type="PANTHER" id="PTHR31301:SF83">
    <property type="entry name" value="PROTEIN ASYMMETRIC LEAVES 2"/>
    <property type="match status" value="1"/>
</dbReference>
<dbReference type="Pfam" id="PF03195">
    <property type="entry name" value="LOB"/>
    <property type="match status" value="1"/>
</dbReference>
<dbReference type="PROSITE" id="PS50891">
    <property type="entry name" value="LOB"/>
    <property type="match status" value="1"/>
</dbReference>
<gene>
    <name type="primary">LBD6</name>
    <name type="synonym">AS2</name>
    <name type="synonym">CRLL3</name>
    <name type="ordered locus">Os01g0889400</name>
    <name type="ordered locus">LOC_Os01g66590</name>
    <name type="ORF">B1099D03.43</name>
    <name type="ORF">OsJ_04355</name>
</gene>
<feature type="chain" id="PRO_0000299140" description="LOB domain-containing protein 6">
    <location>
        <begin position="1"/>
        <end position="269"/>
    </location>
</feature>
<feature type="domain" description="LOB" evidence="2">
    <location>
        <begin position="37"/>
        <end position="138"/>
    </location>
</feature>
<feature type="sequence conflict" description="In Ref. 2; ABU44494." evidence="3" ref="2">
    <original>MASSS</original>
    <variation>MGVHRQ</variation>
    <location>
        <begin position="1"/>
        <end position="5"/>
    </location>
</feature>
<reference key="1">
    <citation type="journal article" date="2005" name="Plant Cell">
        <title>Crown rootless1, which is essential for crown root formation in rice, is a target of an AUXIN RESPONSE FACTOR in auxin signaling.</title>
        <authorList>
            <person name="Inukai Y."/>
            <person name="Sakamoto T."/>
            <person name="Ueguchi-Tanaka M."/>
            <person name="Shibata Y."/>
            <person name="Gomi K."/>
            <person name="Umemura I."/>
            <person name="Hasegawa Y."/>
            <person name="Ashikari M."/>
            <person name="Kitano H."/>
            <person name="Matsuoka M."/>
        </authorList>
    </citation>
    <scope>NUCLEOTIDE SEQUENCE [MRNA]</scope>
</reference>
<reference key="2">
    <citation type="submission" date="2007-04" db="EMBL/GenBank/DDBJ databases">
        <title>Isolation of OsAS2 gene and function analysis in Oryza sativa.</title>
        <authorList>
            <person name="Ma Y."/>
        </authorList>
    </citation>
    <scope>NUCLEOTIDE SEQUENCE [MRNA]</scope>
    <source>
        <strain>cv. Zhonghua 11</strain>
    </source>
</reference>
<reference key="3">
    <citation type="journal article" date="2002" name="Nature">
        <title>The genome sequence and structure of rice chromosome 1.</title>
        <authorList>
            <person name="Sasaki T."/>
            <person name="Matsumoto T."/>
            <person name="Yamamoto K."/>
            <person name="Sakata K."/>
            <person name="Baba T."/>
            <person name="Katayose Y."/>
            <person name="Wu J."/>
            <person name="Niimura Y."/>
            <person name="Cheng Z."/>
            <person name="Nagamura Y."/>
            <person name="Antonio B.A."/>
            <person name="Kanamori H."/>
            <person name="Hosokawa S."/>
            <person name="Masukawa M."/>
            <person name="Arikawa K."/>
            <person name="Chiden Y."/>
            <person name="Hayashi M."/>
            <person name="Okamoto M."/>
            <person name="Ando T."/>
            <person name="Aoki H."/>
            <person name="Arita K."/>
            <person name="Hamada M."/>
            <person name="Harada C."/>
            <person name="Hijishita S."/>
            <person name="Honda M."/>
            <person name="Ichikawa Y."/>
            <person name="Idonuma A."/>
            <person name="Iijima M."/>
            <person name="Ikeda M."/>
            <person name="Ikeno M."/>
            <person name="Ito S."/>
            <person name="Ito T."/>
            <person name="Ito Y."/>
            <person name="Ito Y."/>
            <person name="Iwabuchi A."/>
            <person name="Kamiya K."/>
            <person name="Karasawa W."/>
            <person name="Katagiri S."/>
            <person name="Kikuta A."/>
            <person name="Kobayashi N."/>
            <person name="Kono I."/>
            <person name="Machita K."/>
            <person name="Maehara T."/>
            <person name="Mizuno H."/>
            <person name="Mizubayashi T."/>
            <person name="Mukai Y."/>
            <person name="Nagasaki H."/>
            <person name="Nakashima M."/>
            <person name="Nakama Y."/>
            <person name="Nakamichi Y."/>
            <person name="Nakamura M."/>
            <person name="Namiki N."/>
            <person name="Negishi M."/>
            <person name="Ohta I."/>
            <person name="Ono N."/>
            <person name="Saji S."/>
            <person name="Sakai K."/>
            <person name="Shibata M."/>
            <person name="Shimokawa T."/>
            <person name="Shomura A."/>
            <person name="Song J."/>
            <person name="Takazaki Y."/>
            <person name="Terasawa K."/>
            <person name="Tsuji K."/>
            <person name="Waki K."/>
            <person name="Yamagata H."/>
            <person name="Yamane H."/>
            <person name="Yoshiki S."/>
            <person name="Yoshihara R."/>
            <person name="Yukawa K."/>
            <person name="Zhong H."/>
            <person name="Iwama H."/>
            <person name="Endo T."/>
            <person name="Ito H."/>
            <person name="Hahn J.H."/>
            <person name="Kim H.-I."/>
            <person name="Eun M.-Y."/>
            <person name="Yano M."/>
            <person name="Jiang J."/>
            <person name="Gojobori T."/>
        </authorList>
    </citation>
    <scope>NUCLEOTIDE SEQUENCE [LARGE SCALE GENOMIC DNA]</scope>
    <source>
        <strain>cv. Nipponbare</strain>
    </source>
</reference>
<reference key="4">
    <citation type="journal article" date="2005" name="Nature">
        <title>The map-based sequence of the rice genome.</title>
        <authorList>
            <consortium name="International rice genome sequencing project (IRGSP)"/>
        </authorList>
    </citation>
    <scope>NUCLEOTIDE SEQUENCE [LARGE SCALE GENOMIC DNA]</scope>
    <source>
        <strain>cv. Nipponbare</strain>
    </source>
</reference>
<reference key="5">
    <citation type="journal article" date="2008" name="Nucleic Acids Res.">
        <title>The rice annotation project database (RAP-DB): 2008 update.</title>
        <authorList>
            <consortium name="The rice annotation project (RAP)"/>
        </authorList>
    </citation>
    <scope>GENOME REANNOTATION</scope>
    <source>
        <strain>cv. Nipponbare</strain>
    </source>
</reference>
<reference key="6">
    <citation type="journal article" date="2013" name="Rice">
        <title>Improvement of the Oryza sativa Nipponbare reference genome using next generation sequence and optical map data.</title>
        <authorList>
            <person name="Kawahara Y."/>
            <person name="de la Bastide M."/>
            <person name="Hamilton J.P."/>
            <person name="Kanamori H."/>
            <person name="McCombie W.R."/>
            <person name="Ouyang S."/>
            <person name="Schwartz D.C."/>
            <person name="Tanaka T."/>
            <person name="Wu J."/>
            <person name="Zhou S."/>
            <person name="Childs K.L."/>
            <person name="Davidson R.M."/>
            <person name="Lin H."/>
            <person name="Quesada-Ocampo L."/>
            <person name="Vaillancourt B."/>
            <person name="Sakai H."/>
            <person name="Lee S.S."/>
            <person name="Kim J."/>
            <person name="Numa H."/>
            <person name="Itoh T."/>
            <person name="Buell C.R."/>
            <person name="Matsumoto T."/>
        </authorList>
    </citation>
    <scope>GENOME REANNOTATION</scope>
    <source>
        <strain>cv. Nipponbare</strain>
    </source>
</reference>
<reference key="7">
    <citation type="journal article" date="2005" name="PLoS Biol.">
        <title>The genomes of Oryza sativa: a history of duplications.</title>
        <authorList>
            <person name="Yu J."/>
            <person name="Wang J."/>
            <person name="Lin W."/>
            <person name="Li S."/>
            <person name="Li H."/>
            <person name="Zhou J."/>
            <person name="Ni P."/>
            <person name="Dong W."/>
            <person name="Hu S."/>
            <person name="Zeng C."/>
            <person name="Zhang J."/>
            <person name="Zhang Y."/>
            <person name="Li R."/>
            <person name="Xu Z."/>
            <person name="Li S."/>
            <person name="Li X."/>
            <person name="Zheng H."/>
            <person name="Cong L."/>
            <person name="Lin L."/>
            <person name="Yin J."/>
            <person name="Geng J."/>
            <person name="Li G."/>
            <person name="Shi J."/>
            <person name="Liu J."/>
            <person name="Lv H."/>
            <person name="Li J."/>
            <person name="Wang J."/>
            <person name="Deng Y."/>
            <person name="Ran L."/>
            <person name="Shi X."/>
            <person name="Wang X."/>
            <person name="Wu Q."/>
            <person name="Li C."/>
            <person name="Ren X."/>
            <person name="Wang J."/>
            <person name="Wang X."/>
            <person name="Li D."/>
            <person name="Liu D."/>
            <person name="Zhang X."/>
            <person name="Ji Z."/>
            <person name="Zhao W."/>
            <person name="Sun Y."/>
            <person name="Zhang Z."/>
            <person name="Bao J."/>
            <person name="Han Y."/>
            <person name="Dong L."/>
            <person name="Ji J."/>
            <person name="Chen P."/>
            <person name="Wu S."/>
            <person name="Liu J."/>
            <person name="Xiao Y."/>
            <person name="Bu D."/>
            <person name="Tan J."/>
            <person name="Yang L."/>
            <person name="Ye C."/>
            <person name="Zhang J."/>
            <person name="Xu J."/>
            <person name="Zhou Y."/>
            <person name="Yu Y."/>
            <person name="Zhang B."/>
            <person name="Zhuang S."/>
            <person name="Wei H."/>
            <person name="Liu B."/>
            <person name="Lei M."/>
            <person name="Yu H."/>
            <person name="Li Y."/>
            <person name="Xu H."/>
            <person name="Wei S."/>
            <person name="He X."/>
            <person name="Fang L."/>
            <person name="Zhang Z."/>
            <person name="Zhang Y."/>
            <person name="Huang X."/>
            <person name="Su Z."/>
            <person name="Tong W."/>
            <person name="Li J."/>
            <person name="Tong Z."/>
            <person name="Li S."/>
            <person name="Ye J."/>
            <person name="Wang L."/>
            <person name="Fang L."/>
            <person name="Lei T."/>
            <person name="Chen C.-S."/>
            <person name="Chen H.-C."/>
            <person name="Xu Z."/>
            <person name="Li H."/>
            <person name="Huang H."/>
            <person name="Zhang F."/>
            <person name="Xu H."/>
            <person name="Li N."/>
            <person name="Zhao C."/>
            <person name="Li S."/>
            <person name="Dong L."/>
            <person name="Huang Y."/>
            <person name="Li L."/>
            <person name="Xi Y."/>
            <person name="Qi Q."/>
            <person name="Li W."/>
            <person name="Zhang B."/>
            <person name="Hu W."/>
            <person name="Zhang Y."/>
            <person name="Tian X."/>
            <person name="Jiao Y."/>
            <person name="Liang X."/>
            <person name="Jin J."/>
            <person name="Gao L."/>
            <person name="Zheng W."/>
            <person name="Hao B."/>
            <person name="Liu S.-M."/>
            <person name="Wang W."/>
            <person name="Yuan L."/>
            <person name="Cao M."/>
            <person name="McDermott J."/>
            <person name="Samudrala R."/>
            <person name="Wang J."/>
            <person name="Wong G.K.-S."/>
            <person name="Yang H."/>
        </authorList>
    </citation>
    <scope>NUCLEOTIDE SEQUENCE [LARGE SCALE GENOMIC DNA]</scope>
    <source>
        <strain>cv. Nipponbare</strain>
    </source>
</reference>
<reference key="8">
    <citation type="journal article" date="2003" name="Science">
        <title>Collection, mapping, and annotation of over 28,000 cDNA clones from japonica rice.</title>
        <authorList>
            <consortium name="The rice full-length cDNA consortium"/>
        </authorList>
    </citation>
    <scope>NUCLEOTIDE SEQUENCE [LARGE SCALE MRNA]</scope>
    <source>
        <strain>cv. Nipponbare</strain>
    </source>
</reference>
<evidence type="ECO:0000250" key="1"/>
<evidence type="ECO:0000255" key="2">
    <source>
        <dbReference type="PROSITE-ProRule" id="PRU00291"/>
    </source>
</evidence>
<evidence type="ECO:0000305" key="3"/>